<name>TRI14_TRIAR</name>
<evidence type="ECO:0000269" key="1">
    <source>
    </source>
</evidence>
<evidence type="ECO:0000303" key="2">
    <source>
    </source>
</evidence>
<evidence type="ECO:0000305" key="3"/>
<evidence type="ECO:0000305" key="4">
    <source>
    </source>
</evidence>
<evidence type="ECO:0000305" key="5">
    <source>
    </source>
</evidence>
<comment type="function">
    <text evidence="1 4 5">Part of the gene cluster that mediates the production of the antimicrobial trichothecene harzianum A (HA) that plays a role in Botrytis cinerea antagonistic activity and plant defense priming (PubMed:21642405). The biosynthesis of harzianum A begins with the cyclization of farnesyl diphosphate to trichodiene and is catalyzed by the trichodiene synthase TRI5 (PubMed:21642405). Trichodiene undergoes a series of oxygenations catalyzed by the cytochrome P450 monooxygenase TRI4. TRI4 controls the addition of 3 oxygens at C-2, C-11, and the C-12, C-13-epoxide to form the intermediate isotrichodiol (PubMed:21642405). Isotrichodiol then undergoes a non-enzymatic isomerization and cyclization to form 12,13-epoxytrichothec-9-ene (EPT) which is further converted to trichodermol by the cytochrome P450 monooxygenase TRI11 via C-4 hydroxylation (PubMed:21642405). The last step of HA synthesis is esterification of an octatriendioyl moiety to the C-4 oxygen of trichodermol. The octatriendioyl moiety is probably produced by the polyketide synthase TRI17 and the esterification performed by the trichothecene O-acetyltransferase TRI3 (Probable).</text>
</comment>
<comment type="similarity">
    <text evidence="3">Belongs to the TRI14 family.</text>
</comment>
<protein>
    <recommendedName>
        <fullName evidence="2">Trichothecene biosynthesis protein 14</fullName>
    </recommendedName>
</protein>
<proteinExistence type="inferred from homology"/>
<dbReference type="EMBL" id="FN394491">
    <property type="protein sequence ID" value="CAY87357.1"/>
    <property type="molecule type" value="Genomic_DNA"/>
</dbReference>
<dbReference type="SMR" id="G0KYA7"/>
<dbReference type="CDD" id="cd12811">
    <property type="entry name" value="MALA"/>
    <property type="match status" value="1"/>
</dbReference>
<dbReference type="SUPFAM" id="SSF63829">
    <property type="entry name" value="Calcium-dependent phosphotriesterase"/>
    <property type="match status" value="1"/>
</dbReference>
<organism>
    <name type="scientific">Trichoderma arundinaceum</name>
    <dbReference type="NCBI Taxonomy" id="490622"/>
    <lineage>
        <taxon>Eukaryota</taxon>
        <taxon>Fungi</taxon>
        <taxon>Dikarya</taxon>
        <taxon>Ascomycota</taxon>
        <taxon>Pezizomycotina</taxon>
        <taxon>Sordariomycetes</taxon>
        <taxon>Hypocreomycetidae</taxon>
        <taxon>Hypocreales</taxon>
        <taxon>Hypocreaceae</taxon>
        <taxon>Trichoderma</taxon>
    </lineage>
</organism>
<gene>
    <name evidence="2" type="primary">TRI14</name>
</gene>
<sequence>MQPQVLLSSLLPLSDYISGWSWGSLLGNQPCPPLPAGDLVMRKYQMYPENFMWDKKRCVAYVSNLYNATLSIYDPYKSEVIDTISFPGLSHPGDSATPNPLHTSGLILRPDAATADLLEIVVDNGDCFFSNGNNVSGPDYLLTMDLRTKKVISQIRLNDISNGTYAGYADAELASDGNSYVVGTYVSNILRVTPQSEVSTFFVQEPLGPPREYGYTGLAHVGNVLLSNDNIAKQLVRFDIRDEKGTPVFIPQTPYHEFTTSNVMNLPEKYNNTILLAAENVTPDHPSGGVAVWRSRDQLYNEVEYLGFIPSRLTNALATAARQMSDRIYVVSVYTDGANITVAGYSSEFVLQDITVEVDALVA</sequence>
<feature type="chain" id="PRO_0000445615" description="Trichothecene biosynthesis protein 14">
    <location>
        <begin position="1"/>
        <end position="363"/>
    </location>
</feature>
<accession>G0KYA7</accession>
<reference key="1">
    <citation type="journal article" date="2011" name="Appl. Environ. Microbiol.">
        <title>Identification of loci and functional characterization of trichothecene biosynthesis genes in filamentous fungi of the genus Trichoderma.</title>
        <authorList>
            <person name="Cardoza R.E."/>
            <person name="Malmierca M.G."/>
            <person name="Hermosa M.R."/>
            <person name="Alexander N.J."/>
            <person name="McCormick S.P."/>
            <person name="Proctor R.H."/>
            <person name="Tijerino A.M."/>
            <person name="Rumbero A."/>
            <person name="Monte E."/>
            <person name="Gutierrez S."/>
        </authorList>
    </citation>
    <scope>NUCLEOTIDE SEQUENCE [GENOMIC DNA]</scope>
    <scope>IDENTIFICATION</scope>
    <source>
        <strain>IBT 40837</strain>
    </source>
</reference>
<reference key="2">
    <citation type="journal article" date="2018" name="Fungal Genet. Biol.">
        <title>Effect of deletion of a trichothecene toxin regulatory gene on the secondary metabolism transcriptome of the saprotrophic fungus Trichoderma arundinaceum.</title>
        <authorList>
            <person name="Lindo L."/>
            <person name="McCormick S.P."/>
            <person name="Cardoza R.E."/>
            <person name="Brown D.W."/>
            <person name="Kim H.S."/>
            <person name="Alexander N.J."/>
            <person name="Proctor R.H."/>
            <person name="Gutierrez S."/>
        </authorList>
    </citation>
    <scope>FUNCTION</scope>
</reference>